<comment type="function">
    <text evidence="2 3 4 5">Mediates activation of long-chain fatty acids for both synthesis of cellular lipids, and degradation via beta-oxidation (PubMed:10373116, PubMed:26893370, PubMed:29739804). Probably by regulating lipid storage and catabolism, plays a role in neuronal function (PubMed:25409104).</text>
</comment>
<comment type="catalytic activity">
    <reaction evidence="8 9">
        <text>a long-chain fatty acid + ATP + CoA = a long-chain fatty acyl-CoA + AMP + diphosphate</text>
        <dbReference type="Rhea" id="RHEA:15421"/>
        <dbReference type="ChEBI" id="CHEBI:30616"/>
        <dbReference type="ChEBI" id="CHEBI:33019"/>
        <dbReference type="ChEBI" id="CHEBI:57287"/>
        <dbReference type="ChEBI" id="CHEBI:57560"/>
        <dbReference type="ChEBI" id="CHEBI:83139"/>
        <dbReference type="ChEBI" id="CHEBI:456215"/>
        <dbReference type="EC" id="6.2.1.3"/>
    </reaction>
</comment>
<comment type="disruption phenotype">
    <text evidence="2 3 4 5">Adult neurodegeneration, with marked dilation of photoreceptor axons (PubMed:10373116, PubMed:26893370, PubMed:29739804). Results in degeneration of lamina and retina, defects in the fenestrated basement membrane and ommatidial disarray (PubMed:26893370, PubMed:29739804). The phenotype is exacerbated in constant light conditions and improves in total darkness (PubMed:29739804). Effects are probably due to elevated levels of very long chain fatty acids (VLCFAs) (PubMed:10373116, PubMed:29739804). Feeding the fly mutant with glyceryl trioleate oil or medium-chain fatty acids, blocks the accumulation of excess VLCFAs as well as development of the pathology (PubMed:10373116, PubMed:29739804). Results in altered neuronal function, including altered sleep rebound following sleep deprivation (PubMed:25409104). Simultaneous knockout of hll results in enhanced retinal degeneration and altered fatty acids metabolism (PubMed:26893370).</text>
</comment>
<comment type="similarity">
    <text evidence="7">Belongs to the ATP-dependent AMP-binding enzyme family. Bubblegum subfamily.</text>
</comment>
<gene>
    <name evidence="6 10" type="primary">bgm</name>
    <name evidence="10" type="ORF">CG4501</name>
</gene>
<reference key="1">
    <citation type="journal article" date="2000" name="Science">
        <title>The genome sequence of Drosophila melanogaster.</title>
        <authorList>
            <person name="Adams M.D."/>
            <person name="Celniker S.E."/>
            <person name="Holt R.A."/>
            <person name="Evans C.A."/>
            <person name="Gocayne J.D."/>
            <person name="Amanatides P.G."/>
            <person name="Scherer S.E."/>
            <person name="Li P.W."/>
            <person name="Hoskins R.A."/>
            <person name="Galle R.F."/>
            <person name="George R.A."/>
            <person name="Lewis S.E."/>
            <person name="Richards S."/>
            <person name="Ashburner M."/>
            <person name="Henderson S.N."/>
            <person name="Sutton G.G."/>
            <person name="Wortman J.R."/>
            <person name="Yandell M.D."/>
            <person name="Zhang Q."/>
            <person name="Chen L.X."/>
            <person name="Brandon R.C."/>
            <person name="Rogers Y.-H.C."/>
            <person name="Blazej R.G."/>
            <person name="Champe M."/>
            <person name="Pfeiffer B.D."/>
            <person name="Wan K.H."/>
            <person name="Doyle C."/>
            <person name="Baxter E.G."/>
            <person name="Helt G."/>
            <person name="Nelson C.R."/>
            <person name="Miklos G.L.G."/>
            <person name="Abril J.F."/>
            <person name="Agbayani A."/>
            <person name="An H.-J."/>
            <person name="Andrews-Pfannkoch C."/>
            <person name="Baldwin D."/>
            <person name="Ballew R.M."/>
            <person name="Basu A."/>
            <person name="Baxendale J."/>
            <person name="Bayraktaroglu L."/>
            <person name="Beasley E.M."/>
            <person name="Beeson K.Y."/>
            <person name="Benos P.V."/>
            <person name="Berman B.P."/>
            <person name="Bhandari D."/>
            <person name="Bolshakov S."/>
            <person name="Borkova D."/>
            <person name="Botchan M.R."/>
            <person name="Bouck J."/>
            <person name="Brokstein P."/>
            <person name="Brottier P."/>
            <person name="Burtis K.C."/>
            <person name="Busam D.A."/>
            <person name="Butler H."/>
            <person name="Cadieu E."/>
            <person name="Center A."/>
            <person name="Chandra I."/>
            <person name="Cherry J.M."/>
            <person name="Cawley S."/>
            <person name="Dahlke C."/>
            <person name="Davenport L.B."/>
            <person name="Davies P."/>
            <person name="de Pablos B."/>
            <person name="Delcher A."/>
            <person name="Deng Z."/>
            <person name="Mays A.D."/>
            <person name="Dew I."/>
            <person name="Dietz S.M."/>
            <person name="Dodson K."/>
            <person name="Doup L.E."/>
            <person name="Downes M."/>
            <person name="Dugan-Rocha S."/>
            <person name="Dunkov B.C."/>
            <person name="Dunn P."/>
            <person name="Durbin K.J."/>
            <person name="Evangelista C.C."/>
            <person name="Ferraz C."/>
            <person name="Ferriera S."/>
            <person name="Fleischmann W."/>
            <person name="Fosler C."/>
            <person name="Gabrielian A.E."/>
            <person name="Garg N.S."/>
            <person name="Gelbart W.M."/>
            <person name="Glasser K."/>
            <person name="Glodek A."/>
            <person name="Gong F."/>
            <person name="Gorrell J.H."/>
            <person name="Gu Z."/>
            <person name="Guan P."/>
            <person name="Harris M."/>
            <person name="Harris N.L."/>
            <person name="Harvey D.A."/>
            <person name="Heiman T.J."/>
            <person name="Hernandez J.R."/>
            <person name="Houck J."/>
            <person name="Hostin D."/>
            <person name="Houston K.A."/>
            <person name="Howland T.J."/>
            <person name="Wei M.-H."/>
            <person name="Ibegwam C."/>
            <person name="Jalali M."/>
            <person name="Kalush F."/>
            <person name="Karpen G.H."/>
            <person name="Ke Z."/>
            <person name="Kennison J.A."/>
            <person name="Ketchum K.A."/>
            <person name="Kimmel B.E."/>
            <person name="Kodira C.D."/>
            <person name="Kraft C.L."/>
            <person name="Kravitz S."/>
            <person name="Kulp D."/>
            <person name="Lai Z."/>
            <person name="Lasko P."/>
            <person name="Lei Y."/>
            <person name="Levitsky A.A."/>
            <person name="Li J.H."/>
            <person name="Li Z."/>
            <person name="Liang Y."/>
            <person name="Lin X."/>
            <person name="Liu X."/>
            <person name="Mattei B."/>
            <person name="McIntosh T.C."/>
            <person name="McLeod M.P."/>
            <person name="McPherson D."/>
            <person name="Merkulov G."/>
            <person name="Milshina N.V."/>
            <person name="Mobarry C."/>
            <person name="Morris J."/>
            <person name="Moshrefi A."/>
            <person name="Mount S.M."/>
            <person name="Moy M."/>
            <person name="Murphy B."/>
            <person name="Murphy L."/>
            <person name="Muzny D.M."/>
            <person name="Nelson D.L."/>
            <person name="Nelson D.R."/>
            <person name="Nelson K.A."/>
            <person name="Nixon K."/>
            <person name="Nusskern D.R."/>
            <person name="Pacleb J.M."/>
            <person name="Palazzolo M."/>
            <person name="Pittman G.S."/>
            <person name="Pan S."/>
            <person name="Pollard J."/>
            <person name="Puri V."/>
            <person name="Reese M.G."/>
            <person name="Reinert K."/>
            <person name="Remington K."/>
            <person name="Saunders R.D.C."/>
            <person name="Scheeler F."/>
            <person name="Shen H."/>
            <person name="Shue B.C."/>
            <person name="Siden-Kiamos I."/>
            <person name="Simpson M."/>
            <person name="Skupski M.P."/>
            <person name="Smith T.J."/>
            <person name="Spier E."/>
            <person name="Spradling A.C."/>
            <person name="Stapleton M."/>
            <person name="Strong R."/>
            <person name="Sun E."/>
            <person name="Svirskas R."/>
            <person name="Tector C."/>
            <person name="Turner R."/>
            <person name="Venter E."/>
            <person name="Wang A.H."/>
            <person name="Wang X."/>
            <person name="Wang Z.-Y."/>
            <person name="Wassarman D.A."/>
            <person name="Weinstock G.M."/>
            <person name="Weissenbach J."/>
            <person name="Williams S.M."/>
            <person name="Woodage T."/>
            <person name="Worley K.C."/>
            <person name="Wu D."/>
            <person name="Yang S."/>
            <person name="Yao Q.A."/>
            <person name="Ye J."/>
            <person name="Yeh R.-F."/>
            <person name="Zaveri J.S."/>
            <person name="Zhan M."/>
            <person name="Zhang G."/>
            <person name="Zhao Q."/>
            <person name="Zheng L."/>
            <person name="Zheng X.H."/>
            <person name="Zhong F.N."/>
            <person name="Zhong W."/>
            <person name="Zhou X."/>
            <person name="Zhu S.C."/>
            <person name="Zhu X."/>
            <person name="Smith H.O."/>
            <person name="Gibbs R.A."/>
            <person name="Myers E.W."/>
            <person name="Rubin G.M."/>
            <person name="Venter J.C."/>
        </authorList>
    </citation>
    <scope>NUCLEOTIDE SEQUENCE [LARGE SCALE GENOMIC DNA]</scope>
    <source>
        <strain>Berkeley</strain>
    </source>
</reference>
<reference key="2">
    <citation type="journal article" date="2002" name="Genome Biol.">
        <title>Annotation of the Drosophila melanogaster euchromatic genome: a systematic review.</title>
        <authorList>
            <person name="Misra S."/>
            <person name="Crosby M.A."/>
            <person name="Mungall C.J."/>
            <person name="Matthews B.B."/>
            <person name="Campbell K.S."/>
            <person name="Hradecky P."/>
            <person name="Huang Y."/>
            <person name="Kaminker J.S."/>
            <person name="Millburn G.H."/>
            <person name="Prochnik S.E."/>
            <person name="Smith C.D."/>
            <person name="Tupy J.L."/>
            <person name="Whitfield E.J."/>
            <person name="Bayraktaroglu L."/>
            <person name="Berman B.P."/>
            <person name="Bettencourt B.R."/>
            <person name="Celniker S.E."/>
            <person name="de Grey A.D.N.J."/>
            <person name="Drysdale R.A."/>
            <person name="Harris N.L."/>
            <person name="Richter J."/>
            <person name="Russo S."/>
            <person name="Schroeder A.J."/>
            <person name="Shu S.Q."/>
            <person name="Stapleton M."/>
            <person name="Yamada C."/>
            <person name="Ashburner M."/>
            <person name="Gelbart W.M."/>
            <person name="Rubin G.M."/>
            <person name="Lewis S.E."/>
        </authorList>
    </citation>
    <scope>GENOME REANNOTATION</scope>
    <source>
        <strain>Berkeley</strain>
    </source>
</reference>
<reference key="3">
    <citation type="journal article" date="2002" name="Genome Biol.">
        <title>A Drosophila full-length cDNA resource.</title>
        <authorList>
            <person name="Stapleton M."/>
            <person name="Carlson J.W."/>
            <person name="Brokstein P."/>
            <person name="Yu C."/>
            <person name="Champe M."/>
            <person name="George R.A."/>
            <person name="Guarin H."/>
            <person name="Kronmiller B."/>
            <person name="Pacleb J.M."/>
            <person name="Park S."/>
            <person name="Wan K.H."/>
            <person name="Rubin G.M."/>
            <person name="Celniker S.E."/>
        </authorList>
    </citation>
    <scope>NUCLEOTIDE SEQUENCE [LARGE SCALE MRNA]</scope>
    <source>
        <strain>Berkeley</strain>
        <tissue>Ovary</tissue>
    </source>
</reference>
<reference key="4">
    <citation type="journal article" date="1999" name="Science">
        <title>Preventing neurodegeneration in the Drosophila mutant bubblegum.</title>
        <authorList>
            <person name="Min K.-T."/>
            <person name="Benzer S."/>
        </authorList>
    </citation>
    <scope>FUNCTION</scope>
    <scope>CATALYTIC ACTIVITY</scope>
    <scope>DISRUPTION PHENOTYPE</scope>
</reference>
<reference key="5">
    <citation type="journal article" date="2015" name="Sleep">
        <title>Identification of genes associated with resilience/vulnerability to sleep deprivation and starvation in Drosophila.</title>
        <authorList>
            <person name="Thimgan M.S."/>
            <person name="Seugnet L."/>
            <person name="Turk J."/>
            <person name="Shaw P.J."/>
        </authorList>
    </citation>
    <scope>FUNCTION</scope>
    <scope>DISRUPTION PHENOTYPE</scope>
</reference>
<reference key="6">
    <citation type="journal article" date="2016" name="Dis. Model. Mech.">
        <title>Neurodegeneration in a Drosophila model of adrenoleukodystrophy: the roles of the Bubblegum and Double bubble acyl-CoA synthetases.</title>
        <authorList>
            <person name="Sivachenko A."/>
            <person name="Gordon H.B."/>
            <person name="Kimball S.S."/>
            <person name="Gavin E.J."/>
            <person name="Bonkowsky J.L."/>
            <person name="Letsou A."/>
        </authorList>
    </citation>
    <scope>FUNCTION</scope>
    <scope>CATALYTIC ACTIVITY</scope>
    <scope>DISRUPTION PHENOTYPE</scope>
</reference>
<reference key="7">
    <citation type="journal article" date="2018" name="Dis. Model. Mech.">
        <title>Etiology and treatment of adrenoleukodystrophy: new insights from Drosophila.</title>
        <authorList>
            <person name="Gordon H.B."/>
            <person name="Valdez L."/>
            <person name="Letsou A."/>
        </authorList>
    </citation>
    <scope>FUNCTION</scope>
    <scope>DISRUPTION PHENOTYPE</scope>
</reference>
<proteinExistence type="evidence at protein level"/>
<keyword id="KW-0067">ATP-binding</keyword>
<keyword id="KW-0276">Fatty acid metabolism</keyword>
<keyword id="KW-0436">Ligase</keyword>
<keyword id="KW-0443">Lipid metabolism</keyword>
<keyword id="KW-0547">Nucleotide-binding</keyword>
<keyword id="KW-1185">Reference proteome</keyword>
<name>BGM_DROME</name>
<protein>
    <recommendedName>
        <fullName evidence="6 10">Very long-chain-fatty-acid--CoA ligase bubblegum</fullName>
        <ecNumber evidence="8 9">6.2.1.3</ecNumber>
    </recommendedName>
</protein>
<organism>
    <name type="scientific">Drosophila melanogaster</name>
    <name type="common">Fruit fly</name>
    <dbReference type="NCBI Taxonomy" id="7227"/>
    <lineage>
        <taxon>Eukaryota</taxon>
        <taxon>Metazoa</taxon>
        <taxon>Ecdysozoa</taxon>
        <taxon>Arthropoda</taxon>
        <taxon>Hexapoda</taxon>
        <taxon>Insecta</taxon>
        <taxon>Pterygota</taxon>
        <taxon>Neoptera</taxon>
        <taxon>Endopterygota</taxon>
        <taxon>Diptera</taxon>
        <taxon>Brachycera</taxon>
        <taxon>Muscomorpha</taxon>
        <taxon>Ephydroidea</taxon>
        <taxon>Drosophilidae</taxon>
        <taxon>Drosophila</taxon>
        <taxon>Sophophora</taxon>
    </lineage>
</organism>
<evidence type="ECO:0000250" key="1"/>
<evidence type="ECO:0000269" key="2">
    <source>
    </source>
</evidence>
<evidence type="ECO:0000269" key="3">
    <source>
    </source>
</evidence>
<evidence type="ECO:0000269" key="4">
    <source>
    </source>
</evidence>
<evidence type="ECO:0000269" key="5">
    <source>
    </source>
</evidence>
<evidence type="ECO:0000303" key="6">
    <source>
    </source>
</evidence>
<evidence type="ECO:0000305" key="7"/>
<evidence type="ECO:0000305" key="8">
    <source>
    </source>
</evidence>
<evidence type="ECO:0000305" key="9">
    <source>
    </source>
</evidence>
<evidence type="ECO:0000312" key="10">
    <source>
        <dbReference type="FlyBase" id="FBgn0027348"/>
    </source>
</evidence>
<dbReference type="EC" id="6.2.1.3" evidence="8 9"/>
<dbReference type="EMBL" id="AE014134">
    <property type="protein sequence ID" value="AAF53368.1"/>
    <property type="molecule type" value="Genomic_DNA"/>
</dbReference>
<dbReference type="EMBL" id="AY118315">
    <property type="protein sequence ID" value="AAM48344.1"/>
    <property type="molecule type" value="mRNA"/>
</dbReference>
<dbReference type="RefSeq" id="NP_001285923.1">
    <property type="nucleotide sequence ID" value="NM_001298994.1"/>
</dbReference>
<dbReference type="RefSeq" id="NP_524698.1">
    <property type="nucleotide sequence ID" value="NM_079959.4"/>
</dbReference>
<dbReference type="SMR" id="Q9V3S9"/>
<dbReference type="BioGRID" id="68840">
    <property type="interactions" value="2"/>
</dbReference>
<dbReference type="FunCoup" id="Q9V3S9">
    <property type="interactions" value="77"/>
</dbReference>
<dbReference type="STRING" id="7227.FBpp0080167"/>
<dbReference type="PaxDb" id="7227-FBpp0080167"/>
<dbReference type="EnsemblMetazoa" id="FBtr0080590">
    <property type="protein sequence ID" value="FBpp0080167"/>
    <property type="gene ID" value="FBgn0027348"/>
</dbReference>
<dbReference type="EnsemblMetazoa" id="FBtr0346624">
    <property type="protein sequence ID" value="FBpp0312204"/>
    <property type="gene ID" value="FBgn0027348"/>
</dbReference>
<dbReference type="GeneID" id="44117"/>
<dbReference type="KEGG" id="dme:Dmel_CG4501"/>
<dbReference type="UCSC" id="CG4501-RA">
    <property type="organism name" value="d. melanogaster"/>
</dbReference>
<dbReference type="AGR" id="FB:FBgn0027348"/>
<dbReference type="CTD" id="44117"/>
<dbReference type="FlyBase" id="FBgn0027348">
    <property type="gene designation" value="bgm"/>
</dbReference>
<dbReference type="VEuPathDB" id="VectorBase:FBgn0027348"/>
<dbReference type="eggNOG" id="KOG1256">
    <property type="taxonomic scope" value="Eukaryota"/>
</dbReference>
<dbReference type="GeneTree" id="ENSGT00940000172512"/>
<dbReference type="HOGENOM" id="CLU_000022_45_5_1"/>
<dbReference type="InParanoid" id="Q9V3S9"/>
<dbReference type="OMA" id="FNRPGPN"/>
<dbReference type="OrthoDB" id="3633556at2759"/>
<dbReference type="PhylomeDB" id="Q9V3S9"/>
<dbReference type="Reactome" id="R-DME-75876">
    <property type="pathway name" value="Synthesis of very long-chain fatty acyl-CoAs"/>
</dbReference>
<dbReference type="BioGRID-ORCS" id="44117">
    <property type="hits" value="0 hits in 3 CRISPR screens"/>
</dbReference>
<dbReference type="GenomeRNAi" id="44117"/>
<dbReference type="PRO" id="PR:Q9V3S9"/>
<dbReference type="Proteomes" id="UP000000803">
    <property type="component" value="Chromosome 2L"/>
</dbReference>
<dbReference type="Bgee" id="FBgn0027348">
    <property type="expression patterns" value="Expressed in fat body cell in adult thorax and 81 other cell types or tissues"/>
</dbReference>
<dbReference type="ExpressionAtlas" id="Q9V3S9">
    <property type="expression patterns" value="baseline and differential"/>
</dbReference>
<dbReference type="GO" id="GO:0005737">
    <property type="term" value="C:cytoplasm"/>
    <property type="evidence" value="ECO:0000318"/>
    <property type="project" value="GO_Central"/>
</dbReference>
<dbReference type="GO" id="GO:0005524">
    <property type="term" value="F:ATP binding"/>
    <property type="evidence" value="ECO:0007669"/>
    <property type="project" value="UniProtKB-KW"/>
</dbReference>
<dbReference type="GO" id="GO:0004467">
    <property type="term" value="F:long-chain fatty acid-CoA ligase activity"/>
    <property type="evidence" value="ECO:0000314"/>
    <property type="project" value="FlyBase"/>
</dbReference>
<dbReference type="GO" id="GO:0006631">
    <property type="term" value="P:fatty acid metabolic process"/>
    <property type="evidence" value="ECO:0000315"/>
    <property type="project" value="FlyBase"/>
</dbReference>
<dbReference type="GO" id="GO:0042759">
    <property type="term" value="P:long-chain fatty acid biosynthetic process"/>
    <property type="evidence" value="ECO:0000318"/>
    <property type="project" value="GO_Central"/>
</dbReference>
<dbReference type="GO" id="GO:0001676">
    <property type="term" value="P:long-chain fatty acid metabolic process"/>
    <property type="evidence" value="ECO:0000315"/>
    <property type="project" value="UniProtKB"/>
</dbReference>
<dbReference type="GO" id="GO:0070050">
    <property type="term" value="P:neuron cellular homeostasis"/>
    <property type="evidence" value="ECO:0000315"/>
    <property type="project" value="FlyBase"/>
</dbReference>
<dbReference type="GO" id="GO:0045938">
    <property type="term" value="P:positive regulation of circadian sleep/wake cycle, sleep"/>
    <property type="evidence" value="ECO:0000315"/>
    <property type="project" value="FlyBase"/>
</dbReference>
<dbReference type="GO" id="GO:0034976">
    <property type="term" value="P:response to endoplasmic reticulum stress"/>
    <property type="evidence" value="ECO:0007001"/>
    <property type="project" value="FlyBase"/>
</dbReference>
<dbReference type="CDD" id="cd05933">
    <property type="entry name" value="ACSBG_like"/>
    <property type="match status" value="1"/>
</dbReference>
<dbReference type="Gene3D" id="3.40.50.12780">
    <property type="entry name" value="N-terminal domain of ligase-like"/>
    <property type="match status" value="1"/>
</dbReference>
<dbReference type="InterPro" id="IPR000873">
    <property type="entry name" value="AMP-dep_synth/lig_dom"/>
</dbReference>
<dbReference type="InterPro" id="IPR042099">
    <property type="entry name" value="ANL_N_sf"/>
</dbReference>
<dbReference type="PANTHER" id="PTHR43272:SF32">
    <property type="entry name" value="AMP-DEPENDENT SYNTHETASE_LIGASE DOMAIN-CONTAINING PROTEIN"/>
    <property type="match status" value="1"/>
</dbReference>
<dbReference type="PANTHER" id="PTHR43272">
    <property type="entry name" value="LONG-CHAIN-FATTY-ACID--COA LIGASE"/>
    <property type="match status" value="1"/>
</dbReference>
<dbReference type="Pfam" id="PF00501">
    <property type="entry name" value="AMP-binding"/>
    <property type="match status" value="1"/>
</dbReference>
<dbReference type="Pfam" id="PF23562">
    <property type="entry name" value="AMP-binding_C_3"/>
    <property type="match status" value="1"/>
</dbReference>
<dbReference type="SUPFAM" id="SSF56801">
    <property type="entry name" value="Acetyl-CoA synthetase-like"/>
    <property type="match status" value="1"/>
</dbReference>
<accession>Q9V3S9</accession>
<accession>Q8MT84</accession>
<feature type="chain" id="PRO_0000315817" description="Very long-chain-fatty-acid--CoA ligase bubblegum">
    <location>
        <begin position="1"/>
        <end position="666"/>
    </location>
</feature>
<feature type="binding site" evidence="1">
    <location>
        <begin position="229"/>
        <end position="237"/>
    </location>
    <ligand>
        <name>ATP</name>
        <dbReference type="ChEBI" id="CHEBI:30616"/>
    </ligand>
</feature>
<feature type="binding site" evidence="1">
    <location>
        <begin position="417"/>
        <end position="422"/>
    </location>
    <ligand>
        <name>ATP</name>
        <dbReference type="ChEBI" id="CHEBI:30616"/>
    </ligand>
</feature>
<feature type="binding site" evidence="1">
    <location>
        <position position="495"/>
    </location>
    <ligand>
        <name>ATP</name>
        <dbReference type="ChEBI" id="CHEBI:30616"/>
    </ligand>
</feature>
<feature type="binding site" evidence="1">
    <location>
        <position position="510"/>
    </location>
    <ligand>
        <name>ATP</name>
        <dbReference type="ChEBI" id="CHEBI:30616"/>
    </ligand>
</feature>
<feature type="binding site" evidence="1">
    <location>
        <position position="624"/>
    </location>
    <ligand>
        <name>ATP</name>
        <dbReference type="ChEBI" id="CHEBI:30616"/>
    </ligand>
</feature>
<feature type="sequence conflict" description="In Ref. 3; AAM48344." evidence="7" ref="3">
    <original>M</original>
    <variation>K</variation>
    <location>
        <position position="212"/>
    </location>
</feature>
<sequence length="666" mass="73611">MSTIDALYNRPGPNRLRQADAYRTTNRQDAVKIRMAKDGIGAEEPISVPGLLKRTVNNYGDYPALRTKNGKNGYHTVTYKQYEQKVHQVAKAFIKLGLEEHHSVGVLAFNCAEWFYSAMGAIHARGIIAGIYTTNSADAVQHVLESSHAQIVVVDDAKQMDKIHAIRDKLPKLKAAIQIQEPYSPYLKKEDGYYRWSEIESMNVSDVEDQYMTRLENVAINECCCLVYTSGTVGMPKGVMLSHDNITFDVRGIVKAMDRVVVGAESIVSYLPLSHVAAQTVDIYTCAFVAGCIWFADKDALKGTLVKSLQDARPTRFMGVPRVYEKFQERMVAVASSSGSLKKMLASWAKGITLKHYMVSQGKSSGGFRYKIAKSLIMSKVKQALGFDRVLTLASAAAPMSPETKKYFLSLDLKIVDAFGMSETAGCHTICLPDSVGLNTIGKTLPGCESKFINKDANGHGELCIRGRHVFMGYIDNKEKTEESLDDDCWLHSGDLGFVDDKGYVSLTGRSKEIIITAGGENIPPVHIENTIKKELDAISNAFLVGEQRKYLTVLITLKTEVDKDSGEPLDELSHESSVWVKSLGVEHKTVSDILAAGPCPKVWKSIEDAIKRANKQSISNAQKVQKFTILPHDFSIPTGELGPTLKVKRNVVSKMYADEIEKLYA</sequence>